<dbReference type="EC" id="2.7.4.22" evidence="1"/>
<dbReference type="EMBL" id="AL513382">
    <property type="protein sequence ID" value="CAD08676.1"/>
    <property type="molecule type" value="Genomic_DNA"/>
</dbReference>
<dbReference type="EMBL" id="AE014613">
    <property type="protein sequence ID" value="AAO67949.1"/>
    <property type="molecule type" value="Genomic_DNA"/>
</dbReference>
<dbReference type="RefSeq" id="NP_454825.1">
    <property type="nucleotide sequence ID" value="NC_003198.1"/>
</dbReference>
<dbReference type="RefSeq" id="WP_000224567.1">
    <property type="nucleotide sequence ID" value="NZ_WSUR01000009.1"/>
</dbReference>
<dbReference type="SMR" id="P65934"/>
<dbReference type="STRING" id="220341.gene:17584274"/>
<dbReference type="KEGG" id="stt:t0219"/>
<dbReference type="KEGG" id="sty:STY0241"/>
<dbReference type="PATRIC" id="fig|220341.7.peg.241"/>
<dbReference type="eggNOG" id="COG0528">
    <property type="taxonomic scope" value="Bacteria"/>
</dbReference>
<dbReference type="HOGENOM" id="CLU_033861_0_0_6"/>
<dbReference type="OMA" id="LMGDKQF"/>
<dbReference type="OrthoDB" id="9807458at2"/>
<dbReference type="UniPathway" id="UPA00159">
    <property type="reaction ID" value="UER00275"/>
</dbReference>
<dbReference type="Proteomes" id="UP000000541">
    <property type="component" value="Chromosome"/>
</dbReference>
<dbReference type="Proteomes" id="UP000002670">
    <property type="component" value="Chromosome"/>
</dbReference>
<dbReference type="GO" id="GO:0005829">
    <property type="term" value="C:cytosol"/>
    <property type="evidence" value="ECO:0007669"/>
    <property type="project" value="TreeGrafter"/>
</dbReference>
<dbReference type="GO" id="GO:0005524">
    <property type="term" value="F:ATP binding"/>
    <property type="evidence" value="ECO:0007669"/>
    <property type="project" value="UniProtKB-KW"/>
</dbReference>
<dbReference type="GO" id="GO:0033862">
    <property type="term" value="F:UMP kinase activity"/>
    <property type="evidence" value="ECO:0007669"/>
    <property type="project" value="UniProtKB-EC"/>
</dbReference>
<dbReference type="GO" id="GO:0044210">
    <property type="term" value="P:'de novo' CTP biosynthetic process"/>
    <property type="evidence" value="ECO:0007669"/>
    <property type="project" value="UniProtKB-UniRule"/>
</dbReference>
<dbReference type="GO" id="GO:0006225">
    <property type="term" value="P:UDP biosynthetic process"/>
    <property type="evidence" value="ECO:0007669"/>
    <property type="project" value="TreeGrafter"/>
</dbReference>
<dbReference type="CDD" id="cd04254">
    <property type="entry name" value="AAK_UMPK-PyrH-Ec"/>
    <property type="match status" value="1"/>
</dbReference>
<dbReference type="FunFam" id="3.40.1160.10:FF:000001">
    <property type="entry name" value="Uridylate kinase"/>
    <property type="match status" value="1"/>
</dbReference>
<dbReference type="Gene3D" id="3.40.1160.10">
    <property type="entry name" value="Acetylglutamate kinase-like"/>
    <property type="match status" value="1"/>
</dbReference>
<dbReference type="HAMAP" id="MF_01220_B">
    <property type="entry name" value="PyrH_B"/>
    <property type="match status" value="1"/>
</dbReference>
<dbReference type="InterPro" id="IPR036393">
    <property type="entry name" value="AceGlu_kinase-like_sf"/>
</dbReference>
<dbReference type="InterPro" id="IPR001048">
    <property type="entry name" value="Asp/Glu/Uridylate_kinase"/>
</dbReference>
<dbReference type="InterPro" id="IPR011817">
    <property type="entry name" value="Uridylate_kinase"/>
</dbReference>
<dbReference type="InterPro" id="IPR015963">
    <property type="entry name" value="Uridylate_kinase_bac"/>
</dbReference>
<dbReference type="NCBIfam" id="TIGR02075">
    <property type="entry name" value="pyrH_bact"/>
    <property type="match status" value="1"/>
</dbReference>
<dbReference type="PANTHER" id="PTHR42833">
    <property type="entry name" value="URIDYLATE KINASE"/>
    <property type="match status" value="1"/>
</dbReference>
<dbReference type="PANTHER" id="PTHR42833:SF4">
    <property type="entry name" value="URIDYLATE KINASE PUMPKIN, CHLOROPLASTIC"/>
    <property type="match status" value="1"/>
</dbReference>
<dbReference type="Pfam" id="PF00696">
    <property type="entry name" value="AA_kinase"/>
    <property type="match status" value="1"/>
</dbReference>
<dbReference type="PIRSF" id="PIRSF005650">
    <property type="entry name" value="Uridylate_kin"/>
    <property type="match status" value="1"/>
</dbReference>
<dbReference type="SUPFAM" id="SSF53633">
    <property type="entry name" value="Carbamate kinase-like"/>
    <property type="match status" value="1"/>
</dbReference>
<evidence type="ECO:0000255" key="1">
    <source>
        <dbReference type="HAMAP-Rule" id="MF_01220"/>
    </source>
</evidence>
<name>PYRH_SALTI</name>
<accession>P65934</accession>
<accession>Q8XEQ6</accession>
<sequence>MATNAKPVYKRILLKLSGEALQGTEGFGIDASILDRMAQEIKELVELGIQVGVVIGGGNLFRGAGLAKAGMNRVVGDHMGMLATVMNGLAMRDALHRAYVNARLMSAIPLNGVCDNYSWAEAISLLRNNRVVILSAGTGNPFFTTDSAACLRGIEIEADVVLKATKVDGVFTADPAKDPSATMYDQLTYSEVLDKELKVMDLAAFTLARDHKLPIRVFNMNKPGALRRVVMGEKEGTLITE</sequence>
<organism>
    <name type="scientific">Salmonella typhi</name>
    <dbReference type="NCBI Taxonomy" id="90370"/>
    <lineage>
        <taxon>Bacteria</taxon>
        <taxon>Pseudomonadati</taxon>
        <taxon>Pseudomonadota</taxon>
        <taxon>Gammaproteobacteria</taxon>
        <taxon>Enterobacterales</taxon>
        <taxon>Enterobacteriaceae</taxon>
        <taxon>Salmonella</taxon>
    </lineage>
</organism>
<gene>
    <name evidence="1" type="primary">pyrH</name>
    <name type="ordered locus">STY0241</name>
    <name type="ordered locus">t0219</name>
</gene>
<feature type="chain" id="PRO_0000143878" description="Uridylate kinase">
    <location>
        <begin position="1"/>
        <end position="241"/>
    </location>
</feature>
<feature type="region of interest" description="Involved in allosteric activation by GTP" evidence="1">
    <location>
        <begin position="23"/>
        <end position="28"/>
    </location>
</feature>
<feature type="binding site" evidence="1">
    <location>
        <begin position="15"/>
        <end position="18"/>
    </location>
    <ligand>
        <name>ATP</name>
        <dbReference type="ChEBI" id="CHEBI:30616"/>
    </ligand>
</feature>
<feature type="binding site" evidence="1">
    <location>
        <position position="57"/>
    </location>
    <ligand>
        <name>UMP</name>
        <dbReference type="ChEBI" id="CHEBI:57865"/>
    </ligand>
</feature>
<feature type="binding site" evidence="1">
    <location>
        <position position="58"/>
    </location>
    <ligand>
        <name>ATP</name>
        <dbReference type="ChEBI" id="CHEBI:30616"/>
    </ligand>
</feature>
<feature type="binding site" evidence="1">
    <location>
        <position position="62"/>
    </location>
    <ligand>
        <name>ATP</name>
        <dbReference type="ChEBI" id="CHEBI:30616"/>
    </ligand>
</feature>
<feature type="binding site" evidence="1">
    <location>
        <position position="77"/>
    </location>
    <ligand>
        <name>UMP</name>
        <dbReference type="ChEBI" id="CHEBI:57865"/>
    </ligand>
</feature>
<feature type="binding site" evidence="1">
    <location>
        <begin position="138"/>
        <end position="145"/>
    </location>
    <ligand>
        <name>UMP</name>
        <dbReference type="ChEBI" id="CHEBI:57865"/>
    </ligand>
</feature>
<feature type="binding site" evidence="1">
    <location>
        <position position="165"/>
    </location>
    <ligand>
        <name>ATP</name>
        <dbReference type="ChEBI" id="CHEBI:30616"/>
    </ligand>
</feature>
<feature type="binding site" evidence="1">
    <location>
        <position position="171"/>
    </location>
    <ligand>
        <name>ATP</name>
        <dbReference type="ChEBI" id="CHEBI:30616"/>
    </ligand>
</feature>
<feature type="binding site" evidence="1">
    <location>
        <position position="174"/>
    </location>
    <ligand>
        <name>ATP</name>
        <dbReference type="ChEBI" id="CHEBI:30616"/>
    </ligand>
</feature>
<keyword id="KW-0021">Allosteric enzyme</keyword>
<keyword id="KW-0067">ATP-binding</keyword>
<keyword id="KW-0963">Cytoplasm</keyword>
<keyword id="KW-0418">Kinase</keyword>
<keyword id="KW-0547">Nucleotide-binding</keyword>
<keyword id="KW-0665">Pyrimidine biosynthesis</keyword>
<keyword id="KW-0808">Transferase</keyword>
<reference key="1">
    <citation type="journal article" date="2001" name="Nature">
        <title>Complete genome sequence of a multiple drug resistant Salmonella enterica serovar Typhi CT18.</title>
        <authorList>
            <person name="Parkhill J."/>
            <person name="Dougan G."/>
            <person name="James K.D."/>
            <person name="Thomson N.R."/>
            <person name="Pickard D."/>
            <person name="Wain J."/>
            <person name="Churcher C.M."/>
            <person name="Mungall K.L."/>
            <person name="Bentley S.D."/>
            <person name="Holden M.T.G."/>
            <person name="Sebaihia M."/>
            <person name="Baker S."/>
            <person name="Basham D."/>
            <person name="Brooks K."/>
            <person name="Chillingworth T."/>
            <person name="Connerton P."/>
            <person name="Cronin A."/>
            <person name="Davis P."/>
            <person name="Davies R.M."/>
            <person name="Dowd L."/>
            <person name="White N."/>
            <person name="Farrar J."/>
            <person name="Feltwell T."/>
            <person name="Hamlin N."/>
            <person name="Haque A."/>
            <person name="Hien T.T."/>
            <person name="Holroyd S."/>
            <person name="Jagels K."/>
            <person name="Krogh A."/>
            <person name="Larsen T.S."/>
            <person name="Leather S."/>
            <person name="Moule S."/>
            <person name="O'Gaora P."/>
            <person name="Parry C."/>
            <person name="Quail M.A."/>
            <person name="Rutherford K.M."/>
            <person name="Simmonds M."/>
            <person name="Skelton J."/>
            <person name="Stevens K."/>
            <person name="Whitehead S."/>
            <person name="Barrell B.G."/>
        </authorList>
    </citation>
    <scope>NUCLEOTIDE SEQUENCE [LARGE SCALE GENOMIC DNA]</scope>
    <source>
        <strain>CT18</strain>
    </source>
</reference>
<reference key="2">
    <citation type="journal article" date="2003" name="J. Bacteriol.">
        <title>Comparative genomics of Salmonella enterica serovar Typhi strains Ty2 and CT18.</title>
        <authorList>
            <person name="Deng W."/>
            <person name="Liou S.-R."/>
            <person name="Plunkett G. III"/>
            <person name="Mayhew G.F."/>
            <person name="Rose D.J."/>
            <person name="Burland V."/>
            <person name="Kodoyianni V."/>
            <person name="Schwartz D.C."/>
            <person name="Blattner F.R."/>
        </authorList>
    </citation>
    <scope>NUCLEOTIDE SEQUENCE [LARGE SCALE GENOMIC DNA]</scope>
    <source>
        <strain>ATCC 700931 / Ty2</strain>
    </source>
</reference>
<proteinExistence type="inferred from homology"/>
<comment type="function">
    <text evidence="1">Catalyzes the reversible phosphorylation of UMP to UDP.</text>
</comment>
<comment type="catalytic activity">
    <reaction evidence="1">
        <text>UMP + ATP = UDP + ADP</text>
        <dbReference type="Rhea" id="RHEA:24400"/>
        <dbReference type="ChEBI" id="CHEBI:30616"/>
        <dbReference type="ChEBI" id="CHEBI:57865"/>
        <dbReference type="ChEBI" id="CHEBI:58223"/>
        <dbReference type="ChEBI" id="CHEBI:456216"/>
        <dbReference type="EC" id="2.7.4.22"/>
    </reaction>
</comment>
<comment type="activity regulation">
    <text evidence="1">Allosterically activated by GTP. Inhibited by UTP.</text>
</comment>
<comment type="pathway">
    <text evidence="1">Pyrimidine metabolism; CTP biosynthesis via de novo pathway; UDP from UMP (UMPK route): step 1/1.</text>
</comment>
<comment type="subunit">
    <text evidence="1">Homohexamer.</text>
</comment>
<comment type="subcellular location">
    <subcellularLocation>
        <location evidence="1">Cytoplasm</location>
    </subcellularLocation>
</comment>
<comment type="similarity">
    <text evidence="1">Belongs to the UMP kinase family.</text>
</comment>
<protein>
    <recommendedName>
        <fullName evidence="1">Uridylate kinase</fullName>
        <shortName evidence="1">UK</shortName>
        <ecNumber evidence="1">2.7.4.22</ecNumber>
    </recommendedName>
    <alternativeName>
        <fullName evidence="1">Uridine monophosphate kinase</fullName>
        <shortName evidence="1">UMP kinase</shortName>
        <shortName evidence="1">UMPK</shortName>
    </alternativeName>
</protein>